<reference key="1">
    <citation type="journal article" date="2022" name="Angew. Chem. Int. Ed.">
        <title>Bacterial Avenalumic Acid Biosynthesis Includes Substitution of an Aromatic Amino Group for Hydride by Nitrous Acid Dependent Diazotization.</title>
        <authorList>
            <person name="Kawai S."/>
            <person name="Hagihara R."/>
            <person name="Shin-Ya K."/>
            <person name="Katsuyama Y."/>
            <person name="Ohnishi Y."/>
        </authorList>
    </citation>
    <scope>NUCLEOTIDE SEQUENCE [GENOMIC DNA]</scope>
    <scope>FUNCTION</scope>
    <scope>CATALYTIC ACTIVITY</scope>
    <scope>INDUCTION</scope>
    <source>
        <strain>RI-77</strain>
    </source>
</reference>
<protein>
    <recommendedName>
        <fullName evidence="3">3-diazoavenalumate denitrifying reductase</fullName>
        <ecNumber evidence="4">1.-.-.-</ecNumber>
    </recommendedName>
</protein>
<proteinExistence type="evidence at protein level"/>
<evidence type="ECO:0000269" key="1">
    <source>
    </source>
</evidence>
<evidence type="ECO:0000303" key="2">
    <source>
    </source>
</evidence>
<evidence type="ECO:0000305" key="3"/>
<evidence type="ECO:0000305" key="4">
    <source>
    </source>
</evidence>
<comment type="function">
    <text evidence="1">Oxidoreductase involved in the biosynthesis of avenalumic acid (AVA) (PubMed:36115045). Catalyzes the denitrification of 3-diazoavenalumic acid (3-DAA) to produce AVA (PubMed:36115045). It can also act on 3-diazocoumaric acid (3-DCA) (PubMed:36115045). Can use NADPH or NADH as a reductant, with a preference for NADPH (PubMed:36115045).</text>
</comment>
<comment type="catalytic activity">
    <reaction evidence="1">
        <text>3-diazoavenalumate + NADPH + H(+) = avenalumate + N2 + NADP(+)</text>
        <dbReference type="Rhea" id="RHEA:79947"/>
        <dbReference type="ChEBI" id="CHEBI:15378"/>
        <dbReference type="ChEBI" id="CHEBI:17997"/>
        <dbReference type="ChEBI" id="CHEBI:57783"/>
        <dbReference type="ChEBI" id="CHEBI:58349"/>
        <dbReference type="ChEBI" id="CHEBI:229670"/>
        <dbReference type="ChEBI" id="CHEBI:231422"/>
    </reaction>
    <physiologicalReaction direction="left-to-right" evidence="1">
        <dbReference type="Rhea" id="RHEA:79948"/>
    </physiologicalReaction>
</comment>
<comment type="catalytic activity">
    <reaction evidence="1">
        <text>3-diazoavenalumate + NADH + H(+) = avenalumate + N2 + NAD(+)</text>
        <dbReference type="Rhea" id="RHEA:79967"/>
        <dbReference type="ChEBI" id="CHEBI:15378"/>
        <dbReference type="ChEBI" id="CHEBI:17997"/>
        <dbReference type="ChEBI" id="CHEBI:57540"/>
        <dbReference type="ChEBI" id="CHEBI:57945"/>
        <dbReference type="ChEBI" id="CHEBI:229670"/>
        <dbReference type="ChEBI" id="CHEBI:231422"/>
    </reaction>
    <physiologicalReaction direction="left-to-right" evidence="1">
        <dbReference type="Rhea" id="RHEA:79968"/>
    </physiologicalReaction>
</comment>
<comment type="catalytic activity">
    <reaction evidence="1">
        <text>(E)-3-diazocoumarate + NADPH = N2 + (E)-4-coumarate + NADP(+)</text>
        <dbReference type="Rhea" id="RHEA:79959"/>
        <dbReference type="ChEBI" id="CHEBI:12876"/>
        <dbReference type="ChEBI" id="CHEBI:17997"/>
        <dbReference type="ChEBI" id="CHEBI:57783"/>
        <dbReference type="ChEBI" id="CHEBI:58349"/>
        <dbReference type="ChEBI" id="CHEBI:229673"/>
    </reaction>
</comment>
<comment type="catalytic activity">
    <reaction evidence="1">
        <text>(E)-3-diazocoumarate + NADH = N2 + (E)-4-coumarate + NAD(+)</text>
        <dbReference type="Rhea" id="RHEA:79971"/>
        <dbReference type="ChEBI" id="CHEBI:12876"/>
        <dbReference type="ChEBI" id="CHEBI:17997"/>
        <dbReference type="ChEBI" id="CHEBI:57540"/>
        <dbReference type="ChEBI" id="CHEBI:57945"/>
        <dbReference type="ChEBI" id="CHEBI:229673"/>
    </reaction>
</comment>
<comment type="induction">
    <text evidence="1">The avenalumate biosynthetic gene cluster may be dormant under laboratory conditions.</text>
</comment>
<comment type="similarity">
    <text evidence="3">Belongs to the NAD(P)-dependent epimerase/dehydratase family.</text>
</comment>
<feature type="chain" id="PRO_0000460779" description="3-diazoavenalumate denitrifying reductase">
    <location>
        <begin position="1"/>
        <end position="304"/>
    </location>
</feature>
<accession>P0DXD9</accession>
<organism>
    <name type="scientific">Streptomyces sp</name>
    <dbReference type="NCBI Taxonomy" id="1931"/>
    <lineage>
        <taxon>Bacteria</taxon>
        <taxon>Bacillati</taxon>
        <taxon>Actinomycetota</taxon>
        <taxon>Actinomycetes</taxon>
        <taxon>Kitasatosporales</taxon>
        <taxon>Streptomycetaceae</taxon>
        <taxon>Streptomyces</taxon>
    </lineage>
</organism>
<dbReference type="EC" id="1.-.-.-" evidence="4"/>
<dbReference type="EMBL" id="LC710852">
    <property type="protein sequence ID" value="BDI54815.1"/>
    <property type="molecule type" value="Genomic_DNA"/>
</dbReference>
<dbReference type="SMR" id="P0DXD9"/>
<dbReference type="GO" id="GO:0005737">
    <property type="term" value="C:cytoplasm"/>
    <property type="evidence" value="ECO:0007669"/>
    <property type="project" value="TreeGrafter"/>
</dbReference>
<dbReference type="GO" id="GO:0004029">
    <property type="term" value="F:aldehyde dehydrogenase (NAD+) activity"/>
    <property type="evidence" value="ECO:0007669"/>
    <property type="project" value="TreeGrafter"/>
</dbReference>
<dbReference type="Gene3D" id="3.40.50.720">
    <property type="entry name" value="NAD(P)-binding Rossmann-like Domain"/>
    <property type="match status" value="1"/>
</dbReference>
<dbReference type="InterPro" id="IPR001509">
    <property type="entry name" value="Epimerase_deHydtase"/>
</dbReference>
<dbReference type="InterPro" id="IPR036291">
    <property type="entry name" value="NAD(P)-bd_dom_sf"/>
</dbReference>
<dbReference type="InterPro" id="IPR051783">
    <property type="entry name" value="NAD(P)-dependent_oxidoreduct"/>
</dbReference>
<dbReference type="PANTHER" id="PTHR48079:SF6">
    <property type="entry name" value="NAD(P)-BINDING DOMAIN-CONTAINING PROTEIN-RELATED"/>
    <property type="match status" value="1"/>
</dbReference>
<dbReference type="PANTHER" id="PTHR48079">
    <property type="entry name" value="PROTEIN YEEZ"/>
    <property type="match status" value="1"/>
</dbReference>
<dbReference type="Pfam" id="PF01370">
    <property type="entry name" value="Epimerase"/>
    <property type="match status" value="1"/>
</dbReference>
<dbReference type="SUPFAM" id="SSF51735">
    <property type="entry name" value="NAD(P)-binding Rossmann-fold domains"/>
    <property type="match status" value="1"/>
</dbReference>
<sequence length="304" mass="31619">MRVLVAGATGVIGHPLVGALRARGHNVSALVRDASRAPEADRVVVADALDREAVLSAVSAARPEVVVHQLTALRLLRDDPPEAFAQTARLRTEGTAHLVEAARAAGARRLVAQSIAFAAAPQGPPVLDEDAPLYVDAPDPGWAATVRAVAELERLVASSDLAGLVLRYGTLYGPGTGYARDGGTALRVLAGKLPLPEGGAGVTSFLHVDDAVGAAVAAVESEATGCLHVTDDEPAPAAQWLPHYARTLGAPPPRTLPAALAPRLLGWFMTHQLTTARGAANDRARTALGWKPTHPSWRDGLGRE</sequence>
<keyword id="KW-0521">NADP</keyword>
<keyword id="KW-0560">Oxidoreductase</keyword>
<name>AVAA7_STRSQ</name>
<gene>
    <name evidence="2" type="primary">avaA7</name>
</gene>